<proteinExistence type="inferred from homology"/>
<dbReference type="EC" id="2.1.1.148" evidence="1"/>
<dbReference type="EMBL" id="AE017221">
    <property type="protein sequence ID" value="AAS81079.1"/>
    <property type="molecule type" value="Genomic_DNA"/>
</dbReference>
<dbReference type="RefSeq" id="WP_011173170.1">
    <property type="nucleotide sequence ID" value="NC_005835.1"/>
</dbReference>
<dbReference type="SMR" id="Q72JN9"/>
<dbReference type="KEGG" id="tth:TT_C0731"/>
<dbReference type="eggNOG" id="COG1351">
    <property type="taxonomic scope" value="Bacteria"/>
</dbReference>
<dbReference type="HOGENOM" id="CLU_067790_0_0_0"/>
<dbReference type="OrthoDB" id="9774464at2"/>
<dbReference type="UniPathway" id="UPA00575"/>
<dbReference type="Proteomes" id="UP000000592">
    <property type="component" value="Chromosome"/>
</dbReference>
<dbReference type="GO" id="GO:0050660">
    <property type="term" value="F:flavin adenine dinucleotide binding"/>
    <property type="evidence" value="ECO:0007669"/>
    <property type="project" value="InterPro"/>
</dbReference>
<dbReference type="GO" id="GO:0070402">
    <property type="term" value="F:NADPH binding"/>
    <property type="evidence" value="ECO:0007669"/>
    <property type="project" value="TreeGrafter"/>
</dbReference>
<dbReference type="GO" id="GO:0050797">
    <property type="term" value="F:thymidylate synthase (FAD) activity"/>
    <property type="evidence" value="ECO:0007669"/>
    <property type="project" value="UniProtKB-UniRule"/>
</dbReference>
<dbReference type="GO" id="GO:0004799">
    <property type="term" value="F:thymidylate synthase activity"/>
    <property type="evidence" value="ECO:0007669"/>
    <property type="project" value="TreeGrafter"/>
</dbReference>
<dbReference type="GO" id="GO:0006231">
    <property type="term" value="P:dTMP biosynthetic process"/>
    <property type="evidence" value="ECO:0007669"/>
    <property type="project" value="UniProtKB-UniRule"/>
</dbReference>
<dbReference type="GO" id="GO:0006235">
    <property type="term" value="P:dTTP biosynthetic process"/>
    <property type="evidence" value="ECO:0007669"/>
    <property type="project" value="UniProtKB-UniRule"/>
</dbReference>
<dbReference type="GO" id="GO:0032259">
    <property type="term" value="P:methylation"/>
    <property type="evidence" value="ECO:0007669"/>
    <property type="project" value="UniProtKB-KW"/>
</dbReference>
<dbReference type="CDD" id="cd20175">
    <property type="entry name" value="ThyX"/>
    <property type="match status" value="1"/>
</dbReference>
<dbReference type="Gene3D" id="3.30.1360.170">
    <property type="match status" value="1"/>
</dbReference>
<dbReference type="HAMAP" id="MF_01408">
    <property type="entry name" value="ThyX"/>
    <property type="match status" value="1"/>
</dbReference>
<dbReference type="InterPro" id="IPR003669">
    <property type="entry name" value="Thymidylate_synthase_ThyX"/>
</dbReference>
<dbReference type="InterPro" id="IPR036098">
    <property type="entry name" value="Thymidylate_synthase_ThyX_sf"/>
</dbReference>
<dbReference type="NCBIfam" id="TIGR02170">
    <property type="entry name" value="thyX"/>
    <property type="match status" value="1"/>
</dbReference>
<dbReference type="PANTHER" id="PTHR34934">
    <property type="entry name" value="FLAVIN-DEPENDENT THYMIDYLATE SYNTHASE"/>
    <property type="match status" value="1"/>
</dbReference>
<dbReference type="PANTHER" id="PTHR34934:SF1">
    <property type="entry name" value="FLAVIN-DEPENDENT THYMIDYLATE SYNTHASE"/>
    <property type="match status" value="1"/>
</dbReference>
<dbReference type="Pfam" id="PF02511">
    <property type="entry name" value="Thy1"/>
    <property type="match status" value="1"/>
</dbReference>
<dbReference type="SUPFAM" id="SSF69796">
    <property type="entry name" value="Thymidylate synthase-complementing protein Thy1"/>
    <property type="match status" value="1"/>
</dbReference>
<dbReference type="PROSITE" id="PS51331">
    <property type="entry name" value="THYX"/>
    <property type="match status" value="1"/>
</dbReference>
<accession>Q72JN9</accession>
<gene>
    <name evidence="1" type="primary">thyX</name>
    <name type="ordered locus">TT_C0731</name>
</gene>
<name>THYX_THET2</name>
<organism>
    <name type="scientific">Thermus thermophilus (strain ATCC BAA-163 / DSM 7039 / HB27)</name>
    <dbReference type="NCBI Taxonomy" id="262724"/>
    <lineage>
        <taxon>Bacteria</taxon>
        <taxon>Thermotogati</taxon>
        <taxon>Deinococcota</taxon>
        <taxon>Deinococci</taxon>
        <taxon>Thermales</taxon>
        <taxon>Thermaceae</taxon>
        <taxon>Thermus</taxon>
    </lineage>
</organism>
<keyword id="KW-0274">FAD</keyword>
<keyword id="KW-0285">Flavoprotein</keyword>
<keyword id="KW-0489">Methyltransferase</keyword>
<keyword id="KW-0521">NADP</keyword>
<keyword id="KW-0545">Nucleotide biosynthesis</keyword>
<keyword id="KW-0808">Transferase</keyword>
<protein>
    <recommendedName>
        <fullName evidence="1">Flavin-dependent thymidylate synthase</fullName>
        <shortName evidence="1">FDTS</shortName>
        <ecNumber evidence="1">2.1.1.148</ecNumber>
    </recommendedName>
    <alternativeName>
        <fullName evidence="1">FAD-dependent thymidylate synthase</fullName>
    </alternativeName>
    <alternativeName>
        <fullName evidence="1">Thymidylate synthase ThyX</fullName>
        <shortName evidence="1">TS</shortName>
        <shortName evidence="1">TSase</shortName>
    </alternativeName>
</protein>
<feature type="chain" id="PRO_0000175580" description="Flavin-dependent thymidylate synthase">
    <location>
        <begin position="1"/>
        <end position="270"/>
    </location>
</feature>
<feature type="domain" description="ThyX" evidence="2">
    <location>
        <begin position="13"/>
        <end position="218"/>
    </location>
</feature>
<feature type="short sequence motif" description="ThyX motif" evidence="1">
    <location>
        <begin position="82"/>
        <end position="92"/>
    </location>
</feature>
<feature type="active site" description="Involved in ionization of N3 of dUMP, leading to its activation" evidence="1">
    <location>
        <position position="184"/>
    </location>
</feature>
<feature type="binding site" evidence="1">
    <location>
        <position position="59"/>
    </location>
    <ligand>
        <name>FAD</name>
        <dbReference type="ChEBI" id="CHEBI:57692"/>
        <note>ligand shared between neighboring subunits</note>
    </ligand>
</feature>
<feature type="binding site" evidence="1">
    <location>
        <begin position="79"/>
        <end position="82"/>
    </location>
    <ligand>
        <name>dUMP</name>
        <dbReference type="ChEBI" id="CHEBI:246422"/>
        <note>ligand shared between dimeric partners</note>
    </ligand>
</feature>
<feature type="binding site" evidence="1">
    <location>
        <begin position="82"/>
        <end position="84"/>
    </location>
    <ligand>
        <name>FAD</name>
        <dbReference type="ChEBI" id="CHEBI:57692"/>
        <note>ligand shared between neighboring subunits</note>
    </ligand>
</feature>
<feature type="binding site" description="in other chain" evidence="1">
    <location>
        <begin position="90"/>
        <end position="94"/>
    </location>
    <ligand>
        <name>dUMP</name>
        <dbReference type="ChEBI" id="CHEBI:246422"/>
        <note>ligand shared between dimeric partners</note>
    </ligand>
</feature>
<feature type="binding site" evidence="1">
    <location>
        <position position="90"/>
    </location>
    <ligand>
        <name>FAD</name>
        <dbReference type="ChEBI" id="CHEBI:57692"/>
        <note>ligand shared between neighboring subunits</note>
    </ligand>
</feature>
<feature type="binding site" description="in other chain" evidence="1">
    <location>
        <position position="157"/>
    </location>
    <ligand>
        <name>dUMP</name>
        <dbReference type="ChEBI" id="CHEBI:246422"/>
        <note>ligand shared between dimeric partners</note>
    </ligand>
</feature>
<feature type="binding site" evidence="1">
    <location>
        <begin position="173"/>
        <end position="175"/>
    </location>
    <ligand>
        <name>FAD</name>
        <dbReference type="ChEBI" id="CHEBI:57692"/>
        <note>ligand shared between neighboring subunits</note>
    </ligand>
</feature>
<feature type="binding site" evidence="1">
    <location>
        <position position="179"/>
    </location>
    <ligand>
        <name>FAD</name>
        <dbReference type="ChEBI" id="CHEBI:57692"/>
        <note>ligand shared between neighboring subunits</note>
    </ligand>
</feature>
<feature type="binding site" evidence="1">
    <location>
        <position position="184"/>
    </location>
    <ligand>
        <name>dUMP</name>
        <dbReference type="ChEBI" id="CHEBI:246422"/>
        <note>ligand shared between dimeric partners</note>
    </ligand>
</feature>
<reference key="1">
    <citation type="journal article" date="2004" name="Nat. Biotechnol.">
        <title>The genome sequence of the extreme thermophile Thermus thermophilus.</title>
        <authorList>
            <person name="Henne A."/>
            <person name="Brueggemann H."/>
            <person name="Raasch C."/>
            <person name="Wiezer A."/>
            <person name="Hartsch T."/>
            <person name="Liesegang H."/>
            <person name="Johann A."/>
            <person name="Lienard T."/>
            <person name="Gohl O."/>
            <person name="Martinez-Arias R."/>
            <person name="Jacobi C."/>
            <person name="Starkuviene V."/>
            <person name="Schlenczeck S."/>
            <person name="Dencker S."/>
            <person name="Huber R."/>
            <person name="Klenk H.-P."/>
            <person name="Kramer W."/>
            <person name="Merkl R."/>
            <person name="Gottschalk G."/>
            <person name="Fritz H.-J."/>
        </authorList>
    </citation>
    <scope>NUCLEOTIDE SEQUENCE [LARGE SCALE GENOMIC DNA]</scope>
    <source>
        <strain>ATCC BAA-163 / DSM 7039 / HB27</strain>
    </source>
</reference>
<sequence>MEGPLTIPVLDKGFVRLVDQMGDDRAIVQAARVSYGEGTKTVREDAALIDYLMRHRHTSPFEMVVFKFHVKAPIFVARQWFRHRTASVNEISGRYSILKEEFYEPEAFRKQAKRNKQASEGALLDEEALALLRKVEQEAYGAYRALLEKGVAREMARMVLPLNLYTEFYWKQDLHNLFHFLKLRLAPEAQWEIRQYARAIAEIVKERVPLAWAAFEEHLLEGAFLSRTELRALRGLLTPEVYEKALSSLGLGGSRLKEALEKVFGPGEAL</sequence>
<evidence type="ECO:0000255" key="1">
    <source>
        <dbReference type="HAMAP-Rule" id="MF_01408"/>
    </source>
</evidence>
<evidence type="ECO:0000255" key="2">
    <source>
        <dbReference type="PROSITE-ProRule" id="PRU00661"/>
    </source>
</evidence>
<comment type="function">
    <text evidence="1">Catalyzes the reductive methylation of 2'-deoxyuridine-5'-monophosphate (dUMP) to 2'-deoxythymidine-5'-monophosphate (dTMP) while utilizing 5,10-methylenetetrahydrofolate (mTHF) as the methyl donor, and NADPH and FADH(2) as the reductant.</text>
</comment>
<comment type="catalytic activity">
    <reaction evidence="1">
        <text>dUMP + (6R)-5,10-methylene-5,6,7,8-tetrahydrofolate + NADPH + H(+) = dTMP + (6S)-5,6,7,8-tetrahydrofolate + NADP(+)</text>
        <dbReference type="Rhea" id="RHEA:29043"/>
        <dbReference type="ChEBI" id="CHEBI:15378"/>
        <dbReference type="ChEBI" id="CHEBI:15636"/>
        <dbReference type="ChEBI" id="CHEBI:57453"/>
        <dbReference type="ChEBI" id="CHEBI:57783"/>
        <dbReference type="ChEBI" id="CHEBI:58349"/>
        <dbReference type="ChEBI" id="CHEBI:63528"/>
        <dbReference type="ChEBI" id="CHEBI:246422"/>
        <dbReference type="EC" id="2.1.1.148"/>
    </reaction>
</comment>
<comment type="cofactor">
    <cofactor evidence="1">
        <name>FAD</name>
        <dbReference type="ChEBI" id="CHEBI:57692"/>
    </cofactor>
    <text evidence="1">Binds 4 FAD per tetramer. Each FAD binding site is formed by three monomers.</text>
</comment>
<comment type="pathway">
    <text evidence="1">Pyrimidine metabolism; dTTP biosynthesis.</text>
</comment>
<comment type="subunit">
    <text evidence="1">Homotetramer.</text>
</comment>
<comment type="similarity">
    <text evidence="1">Belongs to the thymidylate synthase ThyX family.</text>
</comment>